<accession>Q8DPZ8</accession>
<evidence type="ECO:0000255" key="1">
    <source>
        <dbReference type="HAMAP-Rule" id="MF_00379"/>
    </source>
</evidence>
<evidence type="ECO:0000305" key="2"/>
<dbReference type="EC" id="3.6.-.-" evidence="1"/>
<dbReference type="EMBL" id="AE007317">
    <property type="protein sequence ID" value="AAK99724.1"/>
    <property type="status" value="ALT_INIT"/>
    <property type="molecule type" value="Genomic_DNA"/>
</dbReference>
<dbReference type="PIR" id="H97986">
    <property type="entry name" value="H97986"/>
</dbReference>
<dbReference type="RefSeq" id="NP_358514.2">
    <property type="nucleotide sequence ID" value="NC_003098.1"/>
</dbReference>
<dbReference type="RefSeq" id="WP_000632720.1">
    <property type="nucleotide sequence ID" value="NC_003098.1"/>
</dbReference>
<dbReference type="SMR" id="Q8DPZ8"/>
<dbReference type="STRING" id="171101.spr0920"/>
<dbReference type="KEGG" id="spr:spr0920"/>
<dbReference type="PATRIC" id="fig|171101.6.peg.1007"/>
<dbReference type="eggNOG" id="COG0486">
    <property type="taxonomic scope" value="Bacteria"/>
</dbReference>
<dbReference type="HOGENOM" id="CLU_019624_4_1_9"/>
<dbReference type="Proteomes" id="UP000000586">
    <property type="component" value="Chromosome"/>
</dbReference>
<dbReference type="GO" id="GO:0005737">
    <property type="term" value="C:cytoplasm"/>
    <property type="evidence" value="ECO:0000318"/>
    <property type="project" value="GO_Central"/>
</dbReference>
<dbReference type="GO" id="GO:0005829">
    <property type="term" value="C:cytosol"/>
    <property type="evidence" value="ECO:0000318"/>
    <property type="project" value="GO_Central"/>
</dbReference>
<dbReference type="GO" id="GO:0005525">
    <property type="term" value="F:GTP binding"/>
    <property type="evidence" value="ECO:0007669"/>
    <property type="project" value="UniProtKB-UniRule"/>
</dbReference>
<dbReference type="GO" id="GO:0003924">
    <property type="term" value="F:GTPase activity"/>
    <property type="evidence" value="ECO:0007669"/>
    <property type="project" value="UniProtKB-UniRule"/>
</dbReference>
<dbReference type="GO" id="GO:0046872">
    <property type="term" value="F:metal ion binding"/>
    <property type="evidence" value="ECO:0007669"/>
    <property type="project" value="UniProtKB-KW"/>
</dbReference>
<dbReference type="GO" id="GO:0030488">
    <property type="term" value="P:tRNA methylation"/>
    <property type="evidence" value="ECO:0000318"/>
    <property type="project" value="GO_Central"/>
</dbReference>
<dbReference type="GO" id="GO:0002098">
    <property type="term" value="P:tRNA wobble uridine modification"/>
    <property type="evidence" value="ECO:0000318"/>
    <property type="project" value="GO_Central"/>
</dbReference>
<dbReference type="CDD" id="cd04164">
    <property type="entry name" value="trmE"/>
    <property type="match status" value="1"/>
</dbReference>
<dbReference type="CDD" id="cd14858">
    <property type="entry name" value="TrmE_N"/>
    <property type="match status" value="1"/>
</dbReference>
<dbReference type="FunFam" id="3.30.1360.120:FF:000003">
    <property type="entry name" value="tRNA modification GTPase MnmE"/>
    <property type="match status" value="1"/>
</dbReference>
<dbReference type="FunFam" id="3.40.50.300:FF:000494">
    <property type="entry name" value="tRNA modification GTPase MnmE"/>
    <property type="match status" value="1"/>
</dbReference>
<dbReference type="Gene3D" id="3.40.50.300">
    <property type="entry name" value="P-loop containing nucleotide triphosphate hydrolases"/>
    <property type="match status" value="1"/>
</dbReference>
<dbReference type="Gene3D" id="3.30.1360.120">
    <property type="entry name" value="Probable tRNA modification gtpase trme, domain 1"/>
    <property type="match status" value="1"/>
</dbReference>
<dbReference type="Gene3D" id="1.20.120.430">
    <property type="entry name" value="tRNA modification GTPase MnmE domain 2"/>
    <property type="match status" value="1"/>
</dbReference>
<dbReference type="HAMAP" id="MF_00379">
    <property type="entry name" value="GTPase_MnmE"/>
    <property type="match status" value="1"/>
</dbReference>
<dbReference type="InterPro" id="IPR031168">
    <property type="entry name" value="G_TrmE"/>
</dbReference>
<dbReference type="InterPro" id="IPR006073">
    <property type="entry name" value="GTP-bd"/>
</dbReference>
<dbReference type="InterPro" id="IPR018948">
    <property type="entry name" value="GTP-bd_TrmE_N"/>
</dbReference>
<dbReference type="InterPro" id="IPR004520">
    <property type="entry name" value="GTPase_MnmE"/>
</dbReference>
<dbReference type="InterPro" id="IPR027368">
    <property type="entry name" value="MnmE_dom2"/>
</dbReference>
<dbReference type="InterPro" id="IPR025867">
    <property type="entry name" value="MnmE_helical"/>
</dbReference>
<dbReference type="InterPro" id="IPR027417">
    <property type="entry name" value="P-loop_NTPase"/>
</dbReference>
<dbReference type="InterPro" id="IPR005225">
    <property type="entry name" value="Small_GTP-bd"/>
</dbReference>
<dbReference type="InterPro" id="IPR027266">
    <property type="entry name" value="TrmE/GcvT_dom1"/>
</dbReference>
<dbReference type="NCBIfam" id="TIGR00450">
    <property type="entry name" value="mnmE_trmE_thdF"/>
    <property type="match status" value="1"/>
</dbReference>
<dbReference type="NCBIfam" id="NF003661">
    <property type="entry name" value="PRK05291.1-3"/>
    <property type="match status" value="1"/>
</dbReference>
<dbReference type="NCBIfam" id="TIGR00231">
    <property type="entry name" value="small_GTP"/>
    <property type="match status" value="1"/>
</dbReference>
<dbReference type="PANTHER" id="PTHR42714">
    <property type="entry name" value="TRNA MODIFICATION GTPASE GTPBP3"/>
    <property type="match status" value="1"/>
</dbReference>
<dbReference type="PANTHER" id="PTHR42714:SF2">
    <property type="entry name" value="TRNA MODIFICATION GTPASE GTPBP3, MITOCHONDRIAL"/>
    <property type="match status" value="1"/>
</dbReference>
<dbReference type="Pfam" id="PF01926">
    <property type="entry name" value="MMR_HSR1"/>
    <property type="match status" value="1"/>
</dbReference>
<dbReference type="Pfam" id="PF12631">
    <property type="entry name" value="MnmE_helical"/>
    <property type="match status" value="1"/>
</dbReference>
<dbReference type="Pfam" id="PF10396">
    <property type="entry name" value="TrmE_N"/>
    <property type="match status" value="1"/>
</dbReference>
<dbReference type="SUPFAM" id="SSF52540">
    <property type="entry name" value="P-loop containing nucleoside triphosphate hydrolases"/>
    <property type="match status" value="1"/>
</dbReference>
<dbReference type="SUPFAM" id="SSF116878">
    <property type="entry name" value="TrmE connector domain"/>
    <property type="match status" value="1"/>
</dbReference>
<dbReference type="PROSITE" id="PS51709">
    <property type="entry name" value="G_TRME"/>
    <property type="match status" value="1"/>
</dbReference>
<comment type="function">
    <text evidence="1">Exhibits a very high intrinsic GTPase hydrolysis rate. Involved in the addition of a carboxymethylaminomethyl (cmnm) group at the wobble position (U34) of certain tRNAs, forming tRNA-cmnm(5)s(2)U34.</text>
</comment>
<comment type="cofactor">
    <cofactor evidence="1">
        <name>K(+)</name>
        <dbReference type="ChEBI" id="CHEBI:29103"/>
    </cofactor>
    <text evidence="1">Binds 1 potassium ion per subunit.</text>
</comment>
<comment type="subunit">
    <text evidence="1">Homodimer. Heterotetramer of two MnmE and two MnmG subunits.</text>
</comment>
<comment type="subcellular location">
    <subcellularLocation>
        <location evidence="1">Cytoplasm</location>
    </subcellularLocation>
</comment>
<comment type="similarity">
    <text evidence="1">Belongs to the TRAFAC class TrmE-Era-EngA-EngB-Septin-like GTPase superfamily. TrmE GTPase family.</text>
</comment>
<comment type="sequence caution" evidence="2">
    <conflict type="erroneous initiation">
        <sequence resource="EMBL-CDS" id="AAK99724"/>
    </conflict>
</comment>
<protein>
    <recommendedName>
        <fullName evidence="1">tRNA modification GTPase MnmE</fullName>
        <ecNumber evidence="1">3.6.-.-</ecNumber>
    </recommendedName>
</protein>
<sequence length="457" mass="50534">MITREFDTIAAISTPLGEGAIGIVRLSGTDSFAIAQKIFKGKDLNKVASHTLNYGHIIDPLTGKVMDEVMVGAMKSPKTFTREDIIEINTHGGIAVTNEILQLAIREGARLAEPGEFTKRAFLNGRVDLTQAEAVMDIIRAKTDKAMNIAVKQLDGSLSDLINNTRQEILNTLAQVEVNIDYPEYDDVEEATTAVVREKTMEFEQLLTKLLRTARRGKILREGISTAIIGRPNVGKSSLLNNLLREDKAIVTDIAGTTRDVIEEYVNINGVPLKLIDTAGIRETDDIVEQIGVERSKKALKEADLVLLVLNASEPLTAQDRQLLEISQDTNRIILLNKTDLPETIETSKLPEDVIRISVLKNQNIDKIEERINNLFFENAGLVEQDATYLSNARHISLIEKAVESLQAVNQGLELGMPVDLLQVDLTRTWEILGEITGDATPDELITQLFSQFCLGK</sequence>
<proteinExistence type="inferred from homology"/>
<gene>
    <name evidence="1" type="primary">mnmE</name>
    <name evidence="1" type="synonym">thdF</name>
    <name evidence="1" type="synonym">trmE</name>
    <name type="ordered locus">spr0920</name>
</gene>
<reference key="1">
    <citation type="journal article" date="2001" name="J. Bacteriol.">
        <title>Genome of the bacterium Streptococcus pneumoniae strain R6.</title>
        <authorList>
            <person name="Hoskins J."/>
            <person name="Alborn W.E. Jr."/>
            <person name="Arnold J."/>
            <person name="Blaszczak L.C."/>
            <person name="Burgett S."/>
            <person name="DeHoff B.S."/>
            <person name="Estrem S.T."/>
            <person name="Fritz L."/>
            <person name="Fu D.-J."/>
            <person name="Fuller W."/>
            <person name="Geringer C."/>
            <person name="Gilmour R."/>
            <person name="Glass J.S."/>
            <person name="Khoja H."/>
            <person name="Kraft A.R."/>
            <person name="Lagace R.E."/>
            <person name="LeBlanc D.J."/>
            <person name="Lee L.N."/>
            <person name="Lefkowitz E.J."/>
            <person name="Lu J."/>
            <person name="Matsushima P."/>
            <person name="McAhren S.M."/>
            <person name="McHenney M."/>
            <person name="McLeaster K."/>
            <person name="Mundy C.W."/>
            <person name="Nicas T.I."/>
            <person name="Norris F.H."/>
            <person name="O'Gara M."/>
            <person name="Peery R.B."/>
            <person name="Robertson G.T."/>
            <person name="Rockey P."/>
            <person name="Sun P.-M."/>
            <person name="Winkler M.E."/>
            <person name="Yang Y."/>
            <person name="Young-Bellido M."/>
            <person name="Zhao G."/>
            <person name="Zook C.A."/>
            <person name="Baltz R.H."/>
            <person name="Jaskunas S.R."/>
            <person name="Rosteck P.R. Jr."/>
            <person name="Skatrud P.L."/>
            <person name="Glass J.I."/>
        </authorList>
    </citation>
    <scope>NUCLEOTIDE SEQUENCE [LARGE SCALE GENOMIC DNA]</scope>
    <source>
        <strain>ATCC BAA-255 / R6</strain>
    </source>
</reference>
<organism>
    <name type="scientific">Streptococcus pneumoniae (strain ATCC BAA-255 / R6)</name>
    <dbReference type="NCBI Taxonomy" id="171101"/>
    <lineage>
        <taxon>Bacteria</taxon>
        <taxon>Bacillati</taxon>
        <taxon>Bacillota</taxon>
        <taxon>Bacilli</taxon>
        <taxon>Lactobacillales</taxon>
        <taxon>Streptococcaceae</taxon>
        <taxon>Streptococcus</taxon>
    </lineage>
</organism>
<feature type="chain" id="PRO_0000188930" description="tRNA modification GTPase MnmE">
    <location>
        <begin position="1"/>
        <end position="457"/>
    </location>
</feature>
<feature type="domain" description="TrmE-type G">
    <location>
        <begin position="223"/>
        <end position="377"/>
    </location>
</feature>
<feature type="binding site" evidence="1">
    <location>
        <position position="25"/>
    </location>
    <ligand>
        <name>(6S)-5-formyl-5,6,7,8-tetrahydrofolate</name>
        <dbReference type="ChEBI" id="CHEBI:57457"/>
    </ligand>
</feature>
<feature type="binding site" evidence="1">
    <location>
        <position position="87"/>
    </location>
    <ligand>
        <name>(6S)-5-formyl-5,6,7,8-tetrahydrofolate</name>
        <dbReference type="ChEBI" id="CHEBI:57457"/>
    </ligand>
</feature>
<feature type="binding site" evidence="1">
    <location>
        <position position="126"/>
    </location>
    <ligand>
        <name>(6S)-5-formyl-5,6,7,8-tetrahydrofolate</name>
        <dbReference type="ChEBI" id="CHEBI:57457"/>
    </ligand>
</feature>
<feature type="binding site" evidence="1">
    <location>
        <begin position="233"/>
        <end position="238"/>
    </location>
    <ligand>
        <name>GTP</name>
        <dbReference type="ChEBI" id="CHEBI:37565"/>
    </ligand>
</feature>
<feature type="binding site" evidence="1">
    <location>
        <position position="233"/>
    </location>
    <ligand>
        <name>K(+)</name>
        <dbReference type="ChEBI" id="CHEBI:29103"/>
    </ligand>
</feature>
<feature type="binding site" evidence="1">
    <location>
        <position position="237"/>
    </location>
    <ligand>
        <name>Mg(2+)</name>
        <dbReference type="ChEBI" id="CHEBI:18420"/>
    </ligand>
</feature>
<feature type="binding site" evidence="1">
    <location>
        <begin position="252"/>
        <end position="258"/>
    </location>
    <ligand>
        <name>GTP</name>
        <dbReference type="ChEBI" id="CHEBI:37565"/>
    </ligand>
</feature>
<feature type="binding site" evidence="1">
    <location>
        <position position="252"/>
    </location>
    <ligand>
        <name>K(+)</name>
        <dbReference type="ChEBI" id="CHEBI:29103"/>
    </ligand>
</feature>
<feature type="binding site" evidence="1">
    <location>
        <position position="254"/>
    </location>
    <ligand>
        <name>K(+)</name>
        <dbReference type="ChEBI" id="CHEBI:29103"/>
    </ligand>
</feature>
<feature type="binding site" evidence="1">
    <location>
        <position position="257"/>
    </location>
    <ligand>
        <name>K(+)</name>
        <dbReference type="ChEBI" id="CHEBI:29103"/>
    </ligand>
</feature>
<feature type="binding site" evidence="1">
    <location>
        <position position="258"/>
    </location>
    <ligand>
        <name>Mg(2+)</name>
        <dbReference type="ChEBI" id="CHEBI:18420"/>
    </ligand>
</feature>
<feature type="binding site" evidence="1">
    <location>
        <begin position="277"/>
        <end position="280"/>
    </location>
    <ligand>
        <name>GTP</name>
        <dbReference type="ChEBI" id="CHEBI:37565"/>
    </ligand>
</feature>
<feature type="binding site" evidence="1">
    <location>
        <position position="457"/>
    </location>
    <ligand>
        <name>(6S)-5-formyl-5,6,7,8-tetrahydrofolate</name>
        <dbReference type="ChEBI" id="CHEBI:57457"/>
    </ligand>
</feature>
<name>MNME_STRR6</name>
<keyword id="KW-0963">Cytoplasm</keyword>
<keyword id="KW-0342">GTP-binding</keyword>
<keyword id="KW-0378">Hydrolase</keyword>
<keyword id="KW-0460">Magnesium</keyword>
<keyword id="KW-0479">Metal-binding</keyword>
<keyword id="KW-0547">Nucleotide-binding</keyword>
<keyword id="KW-0630">Potassium</keyword>
<keyword id="KW-1185">Reference proteome</keyword>
<keyword id="KW-0819">tRNA processing</keyword>